<accession>P13180</accession>
<accession>Q5IX87</accession>
<accession>Q5IX88</accession>
<accession>Q5IX89</accession>
<accession>Q5IX90</accession>
<accession>Q5IX91</accession>
<accession>Q5IX92</accession>
<accession>Q5IX93</accession>
<accession>Q6TYA0</accession>
<name>GLYCO_CHAV</name>
<sequence>MTSSVTISVVLLISFITPLYSYLSIAFPENTKLDWKPVTKNTRYCPMGGEWFLEPGLQEESFLSSTPIGATPSKSDGFLCHAAKWVTTCDFRWYGPKYITHSIHNIKPTRSDCDTALASYKSGTLVSLGFPPESCGYASVTDSEFLVIMITPHHVGVDDYRGHWVDPLFVGGECDQSYCDTIHNSSVWIPADQTKKNICGQSFTPLTVTVAYDKTKEIAAGGIVFKSKYHSHMEGARTCRLSYCGRNGIKFPNGEWVSLDVKTRIQEKHLLPLFKECPAGTEVRSTLQSDGAQVLTSEIQRILDYSLCQNTWDKVERKEPLSPLDLSYLASKSPGKGLAYTVINGTLSFAHTRYVRMWIDGPVLKEPKGKRESPSGISSDIWTQWFKYGDMEIGPNGLLKTAGGYKFPWHLIGMGIVDNELHELSEANPLDHPQLPHAQSIADDSEEIFFGDTGVSKNPVELVTGWFTSWKESLAAGVVLILVVVLIYGVLRCFPVLCTTCRKPKWKKGVERSDSFEMRIFKPNNMRARV</sequence>
<gene>
    <name type="primary">G</name>
</gene>
<keyword id="KW-0002">3D-structure</keyword>
<keyword id="KW-1015">Disulfide bond</keyword>
<keyword id="KW-0325">Glycoprotein</keyword>
<keyword id="KW-1043">Host membrane</keyword>
<keyword id="KW-0945">Host-virus interaction</keyword>
<keyword id="KW-0449">Lipoprotein</keyword>
<keyword id="KW-0472">Membrane</keyword>
<keyword id="KW-0564">Palmitate</keyword>
<keyword id="KW-1185">Reference proteome</keyword>
<keyword id="KW-0732">Signal</keyword>
<keyword id="KW-0812">Transmembrane</keyword>
<keyword id="KW-1133">Transmembrane helix</keyword>
<keyword id="KW-1161">Viral attachment to host cell</keyword>
<keyword id="KW-0261">Viral envelope protein</keyword>
<keyword id="KW-0946">Virion</keyword>
<keyword id="KW-1160">Virus entry into host cell</keyword>
<evidence type="ECO:0000250" key="1"/>
<evidence type="ECO:0000250" key="2">
    <source>
        <dbReference type="UniProtKB" id="P03522"/>
    </source>
</evidence>
<evidence type="ECO:0000250" key="3">
    <source>
        <dbReference type="UniProtKB" id="P0C2X0"/>
    </source>
</evidence>
<evidence type="ECO:0000255" key="4"/>
<evidence type="ECO:0000269" key="5">
    <source>
    </source>
</evidence>
<evidence type="ECO:0000269" key="6">
    <source>
    </source>
</evidence>
<evidence type="ECO:0000305" key="7"/>
<evidence type="ECO:0007744" key="8">
    <source>
        <dbReference type="PDB" id="4D6W"/>
    </source>
</evidence>
<evidence type="ECO:0007744" key="9">
    <source>
        <dbReference type="PDB" id="5MDM"/>
    </source>
</evidence>
<evidence type="ECO:0007829" key="10">
    <source>
        <dbReference type="PDB" id="5MDM"/>
    </source>
</evidence>
<organismHost>
    <name type="scientific">Homo sapiens</name>
    <name type="common">Human</name>
    <dbReference type="NCBI Taxonomy" id="9606"/>
</organismHost>
<organismHost>
    <name type="scientific">Phlebotominae</name>
    <name type="common">sandflies</name>
    <dbReference type="NCBI Taxonomy" id="7198"/>
</organismHost>
<organism>
    <name type="scientific">Chandipura virus (strain I653514)</name>
    <name type="common">CHPV</name>
    <dbReference type="NCBI Taxonomy" id="11273"/>
    <lineage>
        <taxon>Viruses</taxon>
        <taxon>Riboviria</taxon>
        <taxon>Orthornavirae</taxon>
        <taxon>Negarnaviricota</taxon>
        <taxon>Haploviricotina</taxon>
        <taxon>Monjiviricetes</taxon>
        <taxon>Mononegavirales</taxon>
        <taxon>Rhabdoviridae</taxon>
        <taxon>Alpharhabdovirinae</taxon>
        <taxon>Vesiculovirus</taxon>
        <taxon>Vesiculovirus chandipura</taxon>
    </lineage>
</organism>
<reference key="1">
    <citation type="journal article" date="1989" name="Virology">
        <title>Structure and expression of the glycoprotein gene of Chandipura virus.</title>
        <authorList>
            <person name="Masters P.S."/>
            <person name="Bhella R.S."/>
            <person name="Butcher M."/>
            <person name="Patel B."/>
            <person name="Ghosh H.P."/>
            <person name="Banerjee A.K."/>
        </authorList>
    </citation>
    <scope>NUCLEOTIDE SEQUENCE [GENOMIC RNA]</scope>
    <scope>GLYCOSYLATION</scope>
    <scope>PALMITOYLATION</scope>
</reference>
<reference key="2">
    <citation type="journal article" date="2005" name="Emerg. Infect. Dis.">
        <title>G, N, and P gene-based analysis of Chandipura viruses, India.</title>
        <authorList>
            <person name="Arankalle V.A."/>
            <person name="Prabhakar S.S."/>
            <person name="Madhukar W.A."/>
            <person name="Hanumaih X."/>
            <person name="Dattatraya P.S."/>
            <person name="Akhilesh Chandra M."/>
        </authorList>
    </citation>
    <scope>NUCLEOTIDE SEQUENCE [GENOMIC RNA]</scope>
    <source>
        <strain>Isolate CIN0318R</strain>
        <strain>Isolate CIN0327M</strain>
        <strain>Isolate CIN0327R</strain>
        <strain>Isolate CIN0331M</strain>
        <strain>Isolate CIN0360R</strain>
        <strain>Isolate CIN0360V</strain>
        <strain>Isolate CIN6514V</strain>
    </source>
</reference>
<reference key="3">
    <citation type="journal article" date="2020" name="Virus Res.">
        <title>Role of cell surface vimentin in Chandipura virus replication in Neuro-2a cells.</title>
        <authorList>
            <person name="Kavathekar V.K."/>
            <person name="Dhanavade M.J."/>
            <person name="Sonawane K.D."/>
            <person name="Balakrishnan A."/>
        </authorList>
    </citation>
    <scope>INTERACTION WITH HOST VIMENTIN</scope>
</reference>
<reference evidence="8" key="4">
    <citation type="journal article" date="2015" name="PLoS Pathog.">
        <title>Structure of the low pH conformation of Chandipura virus G reveals important features in the evolution of the vesiculovirus glycoprotein.</title>
        <authorList>
            <person name="Baquero E."/>
            <person name="Albertini A.A."/>
            <person name="Raux H."/>
            <person name="Buonocore L."/>
            <person name="Rose J.K."/>
            <person name="Bressanelli S."/>
            <person name="Gaudin Y."/>
        </authorList>
    </citation>
    <scope>X-RAY CRYSTALLOGRAPHY (3.60 ANGSTROMS) OF 22-440</scope>
    <scope>GLYCOSYLATION AT ASN-184</scope>
    <scope>DISULFIDE BONDS</scope>
</reference>
<reference evidence="9" key="5">
    <citation type="journal article" date="2017" name="EMBO J.">
        <title>Structural intermediates in the fusion-associated transition of vesiculovirus glycoprotein.</title>
        <authorList>
            <person name="Baquero E."/>
            <person name="Albertini A.A."/>
            <person name="Raux H."/>
            <person name="Abou-Hamdan A."/>
            <person name="Boeri-Erba E."/>
            <person name="Ouldali M."/>
            <person name="Buonocore L."/>
            <person name="Rose J.K."/>
            <person name="Lepault J."/>
            <person name="Bressanelli S."/>
            <person name="Gaudin Y."/>
        </authorList>
    </citation>
    <scope>X-RAY CRYSTALLOGRAPHY (3.00 ANGSTROMS) OF 22-440</scope>
    <scope>GLYCOSYLATION AT ASN-344</scope>
    <scope>DISULFIDE BONDS</scope>
</reference>
<protein>
    <recommendedName>
        <fullName>Glycoprotein</fullName>
    </recommendedName>
</protein>
<dbReference type="EMBL" id="J04350">
    <property type="protein sequence ID" value="AAA42916.1"/>
    <property type="status" value="ALT_FRAME"/>
    <property type="molecule type" value="Genomic_RNA"/>
</dbReference>
<dbReference type="EMBL" id="AY382603">
    <property type="protein sequence ID" value="AAR26234.1"/>
    <property type="molecule type" value="Genomic_RNA"/>
</dbReference>
<dbReference type="EMBL" id="AY614717">
    <property type="protein sequence ID" value="AAU81933.1"/>
    <property type="molecule type" value="Genomic_RNA"/>
</dbReference>
<dbReference type="EMBL" id="AY614718">
    <property type="protein sequence ID" value="AAU81934.1"/>
    <property type="molecule type" value="Genomic_RNA"/>
</dbReference>
<dbReference type="EMBL" id="AY614719">
    <property type="protein sequence ID" value="AAU81935.1"/>
    <property type="molecule type" value="Genomic_RNA"/>
</dbReference>
<dbReference type="EMBL" id="AY614720">
    <property type="protein sequence ID" value="AAU81936.1"/>
    <property type="molecule type" value="Genomic_RNA"/>
</dbReference>
<dbReference type="EMBL" id="AY614721">
    <property type="protein sequence ID" value="AAU81937.1"/>
    <property type="molecule type" value="Genomic_RNA"/>
</dbReference>
<dbReference type="EMBL" id="AY614722">
    <property type="protein sequence ID" value="AAU81938.1"/>
    <property type="molecule type" value="Genomic_RNA"/>
</dbReference>
<dbReference type="EMBL" id="AY614723">
    <property type="protein sequence ID" value="AAU81939.1"/>
    <property type="molecule type" value="Genomic_RNA"/>
</dbReference>
<dbReference type="PIR" id="A32443">
    <property type="entry name" value="VGVNCV"/>
</dbReference>
<dbReference type="PDB" id="4D6W">
    <property type="method" value="X-ray"/>
    <property type="resolution" value="3.60 A"/>
    <property type="chains" value="A/B/C=22-440"/>
</dbReference>
<dbReference type="PDB" id="5MDM">
    <property type="method" value="X-ray"/>
    <property type="resolution" value="3.00 A"/>
    <property type="chains" value="A/C/E/F=22-440"/>
</dbReference>
<dbReference type="PDBsum" id="4D6W"/>
<dbReference type="PDBsum" id="5MDM"/>
<dbReference type="SMR" id="P13180"/>
<dbReference type="GlyCosmos" id="P13180">
    <property type="glycosylation" value="2 sites, No reported glycans"/>
</dbReference>
<dbReference type="ABCD" id="P13180">
    <property type="antibodies" value="1 sequenced antibody"/>
</dbReference>
<dbReference type="EvolutionaryTrace" id="P13180"/>
<dbReference type="Proteomes" id="UP000008448">
    <property type="component" value="Genome"/>
</dbReference>
<dbReference type="GO" id="GO:0033644">
    <property type="term" value="C:host cell membrane"/>
    <property type="evidence" value="ECO:0007669"/>
    <property type="project" value="UniProtKB-SubCell"/>
</dbReference>
<dbReference type="GO" id="GO:0016020">
    <property type="term" value="C:membrane"/>
    <property type="evidence" value="ECO:0007669"/>
    <property type="project" value="UniProtKB-KW"/>
</dbReference>
<dbReference type="GO" id="GO:0019031">
    <property type="term" value="C:viral envelope"/>
    <property type="evidence" value="ECO:0007669"/>
    <property type="project" value="UniProtKB-KW"/>
</dbReference>
<dbReference type="GO" id="GO:0055036">
    <property type="term" value="C:virion membrane"/>
    <property type="evidence" value="ECO:0007669"/>
    <property type="project" value="UniProtKB-SubCell"/>
</dbReference>
<dbReference type="GO" id="GO:0046718">
    <property type="term" value="P:symbiont entry into host cell"/>
    <property type="evidence" value="ECO:0007669"/>
    <property type="project" value="UniProtKB-KW"/>
</dbReference>
<dbReference type="GO" id="GO:0019062">
    <property type="term" value="P:virion attachment to host cell"/>
    <property type="evidence" value="ECO:0007669"/>
    <property type="project" value="UniProtKB-KW"/>
</dbReference>
<dbReference type="Gene3D" id="2.30.29.130">
    <property type="match status" value="1"/>
</dbReference>
<dbReference type="Gene3D" id="2.30.30.640">
    <property type="match status" value="1"/>
</dbReference>
<dbReference type="InterPro" id="IPR055447">
    <property type="entry name" value="Rhabdo_glycop_CD"/>
</dbReference>
<dbReference type="InterPro" id="IPR001903">
    <property type="entry name" value="Rhabdo_glycop_FD"/>
</dbReference>
<dbReference type="Pfam" id="PF24833">
    <property type="entry name" value="Rhabdo_glycop_CD"/>
    <property type="match status" value="1"/>
</dbReference>
<dbReference type="Pfam" id="PF00974">
    <property type="entry name" value="Rhabdo_glycop_FD"/>
    <property type="match status" value="1"/>
</dbReference>
<dbReference type="SUPFAM" id="SSF161008">
    <property type="entry name" value="Viral glycoprotein ectodomain-like"/>
    <property type="match status" value="1"/>
</dbReference>
<proteinExistence type="evidence at protein level"/>
<feature type="signal peptide" evidence="4">
    <location>
        <begin position="1"/>
        <end position="21"/>
    </location>
</feature>
<feature type="chain" id="PRO_0000040990" description="Glycoprotein">
    <location>
        <begin position="22"/>
        <end position="530"/>
    </location>
</feature>
<feature type="topological domain" description="Virion surface" evidence="4">
    <location>
        <begin position="22"/>
        <end position="473"/>
    </location>
</feature>
<feature type="transmembrane region" description="Helical" evidence="4">
    <location>
        <begin position="474"/>
        <end position="494"/>
    </location>
</feature>
<feature type="topological domain" description="Intravirion" evidence="4">
    <location>
        <begin position="495"/>
        <end position="530"/>
    </location>
</feature>
<feature type="region of interest" description="Fusion peptide" evidence="3">
    <location>
        <begin position="58"/>
        <end position="177"/>
    </location>
</feature>
<feature type="region of interest" description="Trimerization" evidence="3">
    <location>
        <begin position="263"/>
        <end position="317"/>
    </location>
</feature>
<feature type="region of interest" description="Trimerization" evidence="3">
    <location>
        <begin position="392"/>
        <end position="414"/>
    </location>
</feature>
<feature type="site" description="pH sensor in the pre-fusion state" evidence="3">
    <location>
        <position position="81"/>
    </location>
</feature>
<feature type="site" description="Interaction with host Vim" evidence="6">
    <location>
        <position position="149"/>
    </location>
</feature>
<feature type="site" description="Interaction with host Vim" evidence="6">
    <location>
        <position position="155"/>
    </location>
</feature>
<feature type="site" description="Interaction with host Vim" evidence="6">
    <location>
        <position position="159"/>
    </location>
</feature>
<feature type="site" description="pH sensor in the pre-fusion state" evidence="3">
    <location>
        <position position="183"/>
    </location>
</feature>
<feature type="site" description="pH sensor in the pre-fusion state" evidence="3">
    <location>
        <position position="432"/>
    </location>
</feature>
<feature type="lipid moiety-binding region" description="S-palmitoyl cysteine; by host" evidence="1">
    <location>
        <position position="498"/>
    </location>
</feature>
<feature type="glycosylation site" description="N-linked (GlcNAc...) asparagine; by host" evidence="8">
    <location>
        <position position="184"/>
    </location>
</feature>
<feature type="glycosylation site" description="N-linked (GlcNAc...) asparagine; by host" evidence="9">
    <location>
        <position position="344"/>
    </location>
</feature>
<feature type="disulfide bond" evidence="8 9">
    <location>
        <begin position="45"/>
        <end position="308"/>
    </location>
</feature>
<feature type="disulfide bond" evidence="8 9">
    <location>
        <begin position="80"/>
        <end position="113"/>
    </location>
</feature>
<feature type="disulfide bond" evidence="8 9">
    <location>
        <begin position="89"/>
        <end position="135"/>
    </location>
</feature>
<feature type="disulfide bond" evidence="8 9">
    <location>
        <begin position="174"/>
        <end position="179"/>
    </location>
</feature>
<feature type="disulfide bond" evidence="8 9">
    <location>
        <begin position="199"/>
        <end position="244"/>
    </location>
</feature>
<feature type="disulfide bond" evidence="8 9">
    <location>
        <begin position="239"/>
        <end position="277"/>
    </location>
</feature>
<feature type="sequence variant" description="In strain: Isolate CIN0360R and Isolate CIN0360V.">
    <original>I</original>
    <variation>V</variation>
    <location>
        <position position="16"/>
    </location>
</feature>
<feature type="sequence variant" description="In strain: Isolate CIN0309R, Isolate CIN0318R, Isolate CIN0327M, Isolate CIN0327R, Isolate CIN0331M, Isolate CIN0360R and Isolate CIN0360V.">
    <original>L</original>
    <variation>S</variation>
    <location>
        <position position="19"/>
    </location>
</feature>
<feature type="sequence variant" description="In strain: Isolate CIN0309R, Isolate CIN0318R,in Isolate CIN0327M, Isolate CIN0327R, Isolate CIN0331M, Isolate CIN0360R and Isolate CIN0360V.">
    <original>Y</original>
    <variation>S</variation>
    <location>
        <position position="22"/>
    </location>
</feature>
<feature type="sequence variant" description="In strain: Isolate CIN0360R and Isolate CIN0360V.">
    <original>N</original>
    <variation>S</variation>
    <location>
        <position position="30"/>
    </location>
</feature>
<feature type="sequence variant" description="In strain: Isolate CIN0327M and Isolate CIN0327R.">
    <original>K</original>
    <variation>R</variation>
    <location>
        <position position="40"/>
    </location>
</feature>
<feature type="sequence variant" description="In strain: Isolate CIN0309R, Isolate CIN0318R, Isolate CIN0327M, Isolate CIN0327R, Isolate CIN0331M, Isolate CIN0360R, Isolate CIN0360V and Isolate CIN6514V.">
    <original>L</original>
    <variation>P</variation>
    <location>
        <position position="128"/>
    </location>
</feature>
<feature type="sequence variant" description="In strain: Isolate CIN0309R, Isolate CIN0360R and Isolate CIN0360V.">
    <original>D</original>
    <variation>V</variation>
    <location>
        <position position="213"/>
    </location>
</feature>
<feature type="sequence variant" description="In strain: Isolate CIN6514V.">
    <original>A</original>
    <variation>T</variation>
    <location>
        <position position="219"/>
    </location>
</feature>
<feature type="sequence variant" description="In strain: Isolate CIN0309R, Isolate CIN0318R, Isolate CIN0327M, Isolate CIN0327R, Isolate CIN0331M, Isolate CIN0360R and Isolate CIN0360V.">
    <original>G</original>
    <variation>A</variation>
    <location>
        <position position="222"/>
    </location>
</feature>
<feature type="sequence variant" description="In strain: Isolate CIN0309R, Isolate CIN0318R, Isolate CIN0327M, Isolate CIN0327R, Isolate CIN0331M, Isolate CIN0360R and Isolate CIN0360V.">
    <original>R</original>
    <variation>K</variation>
    <location>
        <position position="264"/>
    </location>
</feature>
<feature type="sequence variant" description="In strain: Isolate CIN0309R, Isolate CIN0318R, Isolate CIN0327M, Isolate CIN0327R,n Isolate CIN0331M, Isolate CIN0360R and Isolate CIN0360V.">
    <original>H</original>
    <variation>P</variation>
    <location>
        <position position="269"/>
    </location>
</feature>
<feature type="sequence variant" description="In strain: Isolate CIN0309R, Isolate CIN0318R, Isolate CIN0327M, Isolate CIN0327R and Isolate CIN0331M.">
    <original>P</original>
    <variation>M</variation>
    <location>
        <position position="367"/>
    </location>
</feature>
<feature type="sequence variant" description="In strain: Isolate CIN0327M and Isolate CIN0327R.">
    <original>L</original>
    <variation>V</variation>
    <location>
        <position position="424"/>
    </location>
</feature>
<feature type="sequence variant" description="In strain: Isolate CIN0360R and Isolate CIN0360V.">
    <original>R</original>
    <variation>K</variation>
    <location>
        <position position="502"/>
    </location>
</feature>
<feature type="strand" evidence="10">
    <location>
        <begin position="23"/>
        <end position="31"/>
    </location>
</feature>
<feature type="helix" evidence="10">
    <location>
        <begin position="49"/>
        <end position="51"/>
    </location>
</feature>
<feature type="strand" evidence="10">
    <location>
        <begin position="57"/>
        <end position="70"/>
    </location>
</feature>
<feature type="helix" evidence="10">
    <location>
        <begin position="72"/>
        <end position="75"/>
    </location>
</feature>
<feature type="strand" evidence="10">
    <location>
        <begin position="77"/>
        <end position="90"/>
    </location>
</feature>
<feature type="strand" evidence="10">
    <location>
        <begin position="93"/>
        <end position="96"/>
    </location>
</feature>
<feature type="strand" evidence="10">
    <location>
        <begin position="98"/>
        <end position="106"/>
    </location>
</feature>
<feature type="helix" evidence="10">
    <location>
        <begin position="110"/>
        <end position="121"/>
    </location>
</feature>
<feature type="strand" evidence="10">
    <location>
        <begin position="137"/>
        <end position="139"/>
    </location>
</feature>
<feature type="strand" evidence="10">
    <location>
        <begin position="141"/>
        <end position="152"/>
    </location>
</feature>
<feature type="strand" evidence="10">
    <location>
        <begin position="156"/>
        <end position="158"/>
    </location>
</feature>
<feature type="turn" evidence="10">
    <location>
        <begin position="159"/>
        <end position="162"/>
    </location>
</feature>
<feature type="strand" evidence="10">
    <location>
        <begin position="163"/>
        <end position="165"/>
    </location>
</feature>
<feature type="strand" evidence="10">
    <location>
        <begin position="172"/>
        <end position="174"/>
    </location>
</feature>
<feature type="strand" evidence="10">
    <location>
        <begin position="176"/>
        <end position="191"/>
    </location>
</feature>
<feature type="strand" evidence="10">
    <location>
        <begin position="200"/>
        <end position="216"/>
    </location>
</feature>
<feature type="helix" evidence="10">
    <location>
        <begin position="220"/>
        <end position="222"/>
    </location>
</feature>
<feature type="strand" evidence="10">
    <location>
        <begin position="223"/>
        <end position="226"/>
    </location>
</feature>
<feature type="strand" evidence="10">
    <location>
        <begin position="232"/>
        <end position="234"/>
    </location>
</feature>
<feature type="helix" evidence="10">
    <location>
        <begin position="235"/>
        <end position="237"/>
    </location>
</feature>
<feature type="strand" evidence="10">
    <location>
        <begin position="239"/>
        <end position="243"/>
    </location>
</feature>
<feature type="strand" evidence="10">
    <location>
        <begin position="246"/>
        <end position="250"/>
    </location>
</feature>
<feature type="strand" evidence="10">
    <location>
        <begin position="254"/>
        <end position="258"/>
    </location>
</feature>
<feature type="strand" evidence="10">
    <location>
        <begin position="268"/>
        <end position="270"/>
    </location>
</feature>
<feature type="helix" evidence="10">
    <location>
        <begin position="271"/>
        <end position="273"/>
    </location>
</feature>
<feature type="helix" evidence="10">
    <location>
        <begin position="287"/>
        <end position="289"/>
    </location>
</feature>
<feature type="helix" evidence="10">
    <location>
        <begin position="291"/>
        <end position="316"/>
    </location>
</feature>
<feature type="helix" evidence="10">
    <location>
        <begin position="323"/>
        <end position="327"/>
    </location>
</feature>
<feature type="strand" evidence="10">
    <location>
        <begin position="332"/>
        <end position="343"/>
    </location>
</feature>
<feature type="strand" evidence="10">
    <location>
        <begin position="346"/>
        <end position="360"/>
    </location>
</feature>
<feature type="strand" evidence="10">
    <location>
        <begin position="362"/>
        <end position="372"/>
    </location>
</feature>
<feature type="strand" evidence="10">
    <location>
        <begin position="378"/>
        <end position="380"/>
    </location>
</feature>
<feature type="strand" evidence="10">
    <location>
        <begin position="386"/>
        <end position="388"/>
    </location>
</feature>
<feature type="strand" evidence="10">
    <location>
        <begin position="391"/>
        <end position="393"/>
    </location>
</feature>
<feature type="helix" evidence="10">
    <location>
        <begin position="395"/>
        <end position="397"/>
    </location>
</feature>
<feature type="strand" evidence="10">
    <location>
        <begin position="399"/>
        <end position="401"/>
    </location>
</feature>
<feature type="strand" evidence="10">
    <location>
        <begin position="404"/>
        <end position="406"/>
    </location>
</feature>
<feature type="helix" evidence="10">
    <location>
        <begin position="409"/>
        <end position="411"/>
    </location>
</feature>
<feature type="strand" evidence="10">
    <location>
        <begin position="413"/>
        <end position="419"/>
    </location>
</feature>
<feature type="helix" evidence="10">
    <location>
        <begin position="422"/>
        <end position="425"/>
    </location>
</feature>
<comment type="function">
    <text evidence="2">Attaches the virus to host receptors, inducing clathrin-dependent endocytosis of the virion. In the endosome, the acidic pH induces conformational changes in the glycoprotein trimer, which trigger fusion between virus and endosomal membrane.</text>
</comment>
<comment type="subunit">
    <text evidence="2 6">Homotrimer. Interacts with host LDL at target cell surface (By similarity). Interacts with host Vim; this interaction might facilitate the binding of the virus to the cells (PubMed:32418904).</text>
</comment>
<comment type="subcellular location">
    <subcellularLocation>
        <location evidence="2">Virion membrane</location>
        <topology evidence="2">Single-pass type I membrane protein</topology>
    </subcellularLocation>
    <subcellularLocation>
        <location evidence="2">Host membrane</location>
        <topology evidence="2">Single-pass type I membrane protein</topology>
    </subcellularLocation>
</comment>
<comment type="PTM">
    <text evidence="5">Glycosylated by host (PubMed:2741347). Palmitoylated by host (PubMed:2741347).</text>
</comment>
<comment type="similarity">
    <text evidence="7">Belongs to the vesiculovirus glycoprotein family.</text>
</comment>
<comment type="sequence caution" evidence="7">
    <conflict type="frameshift">
        <sequence resource="EMBL-CDS" id="AAA42916"/>
    </conflict>
</comment>